<reference key="1">
    <citation type="journal article" date="2007" name="Mol. Biol. Evol.">
        <title>Gene relocations within chloroplast genomes of Jasminum and Menodora (Oleaceae) are due to multiple, overlapping inversions.</title>
        <authorList>
            <person name="Lee H.-L."/>
            <person name="Jansen R.K."/>
            <person name="Chumley T.W."/>
            <person name="Kim K.-J."/>
        </authorList>
    </citation>
    <scope>NUCLEOTIDE SEQUENCE [LARGE SCALE GENOMIC DNA]</scope>
</reference>
<geneLocation type="chloroplast"/>
<gene>
    <name evidence="1" type="primary">ndhJ</name>
    <name type="ORF">JNC0546</name>
</gene>
<accession>Q06RC6</accession>
<sequence>MQGRLSAWLVKRGLIHRSLGFDYQGIETLQIKPKDWHSIAVILYVYGYNYLRSQCAYDVAPGGLLASVYHLTRIEYGGDQPEEVCIKVFASRRNPRIPSVFWVWKSVDFQERESYDMLGISYDNHPRLKRILMPESWIGWPLRKDYIAPNFYEIQDAH</sequence>
<comment type="function">
    <text evidence="1">NDH shuttles electrons from NAD(P)H:plastoquinone, via FMN and iron-sulfur (Fe-S) centers, to quinones in the photosynthetic chain and possibly in a chloroplast respiratory chain. The immediate electron acceptor for the enzyme in this species is believed to be plastoquinone. Couples the redox reaction to proton translocation, and thus conserves the redox energy in a proton gradient.</text>
</comment>
<comment type="catalytic activity">
    <reaction evidence="1">
        <text>a plastoquinone + NADH + (n+1) H(+)(in) = a plastoquinol + NAD(+) + n H(+)(out)</text>
        <dbReference type="Rhea" id="RHEA:42608"/>
        <dbReference type="Rhea" id="RHEA-COMP:9561"/>
        <dbReference type="Rhea" id="RHEA-COMP:9562"/>
        <dbReference type="ChEBI" id="CHEBI:15378"/>
        <dbReference type="ChEBI" id="CHEBI:17757"/>
        <dbReference type="ChEBI" id="CHEBI:57540"/>
        <dbReference type="ChEBI" id="CHEBI:57945"/>
        <dbReference type="ChEBI" id="CHEBI:62192"/>
    </reaction>
</comment>
<comment type="catalytic activity">
    <reaction evidence="1">
        <text>a plastoquinone + NADPH + (n+1) H(+)(in) = a plastoquinol + NADP(+) + n H(+)(out)</text>
        <dbReference type="Rhea" id="RHEA:42612"/>
        <dbReference type="Rhea" id="RHEA-COMP:9561"/>
        <dbReference type="Rhea" id="RHEA-COMP:9562"/>
        <dbReference type="ChEBI" id="CHEBI:15378"/>
        <dbReference type="ChEBI" id="CHEBI:17757"/>
        <dbReference type="ChEBI" id="CHEBI:57783"/>
        <dbReference type="ChEBI" id="CHEBI:58349"/>
        <dbReference type="ChEBI" id="CHEBI:62192"/>
    </reaction>
</comment>
<comment type="subunit">
    <text evidence="1">NDH is composed of at least 16 different subunits, 5 of which are encoded in the nucleus.</text>
</comment>
<comment type="subcellular location">
    <subcellularLocation>
        <location evidence="1">Plastid</location>
        <location evidence="1">Chloroplast thylakoid membrane</location>
        <topology evidence="1">Peripheral membrane protein</topology>
        <orientation evidence="1">Stromal side</orientation>
    </subcellularLocation>
</comment>
<comment type="similarity">
    <text evidence="1">Belongs to the complex I 30 kDa subunit family.</text>
</comment>
<evidence type="ECO:0000255" key="1">
    <source>
        <dbReference type="HAMAP-Rule" id="MF_01357"/>
    </source>
</evidence>
<proteinExistence type="inferred from homology"/>
<keyword id="KW-0150">Chloroplast</keyword>
<keyword id="KW-0472">Membrane</keyword>
<keyword id="KW-0520">NAD</keyword>
<keyword id="KW-0521">NADP</keyword>
<keyword id="KW-0934">Plastid</keyword>
<keyword id="KW-0618">Plastoquinone</keyword>
<keyword id="KW-0874">Quinone</keyword>
<keyword id="KW-0793">Thylakoid</keyword>
<keyword id="KW-1278">Translocase</keyword>
<keyword id="KW-0813">Transport</keyword>
<protein>
    <recommendedName>
        <fullName evidence="1">NAD(P)H-quinone oxidoreductase subunit J, chloroplastic</fullName>
        <ecNumber evidence="1">7.1.1.-</ecNumber>
    </recommendedName>
    <alternativeName>
        <fullName>NAD(P)H dehydrogenase subunit J</fullName>
    </alternativeName>
    <alternativeName>
        <fullName evidence="1">NADH-plastoquinone oxidoreductase subunit J</fullName>
    </alternativeName>
</protein>
<dbReference type="EC" id="7.1.1.-" evidence="1"/>
<dbReference type="EMBL" id="DQ673255">
    <property type="protein sequence ID" value="ABG74633.1"/>
    <property type="molecule type" value="Genomic_DNA"/>
</dbReference>
<dbReference type="RefSeq" id="YP_778495.1">
    <property type="nucleotide sequence ID" value="NC_008407.1"/>
</dbReference>
<dbReference type="SMR" id="Q06RC6"/>
<dbReference type="GeneID" id="4319847"/>
<dbReference type="GO" id="GO:0009535">
    <property type="term" value="C:chloroplast thylakoid membrane"/>
    <property type="evidence" value="ECO:0007669"/>
    <property type="project" value="UniProtKB-SubCell"/>
</dbReference>
<dbReference type="GO" id="GO:0008137">
    <property type="term" value="F:NADH dehydrogenase (ubiquinone) activity"/>
    <property type="evidence" value="ECO:0007669"/>
    <property type="project" value="InterPro"/>
</dbReference>
<dbReference type="GO" id="GO:0048038">
    <property type="term" value="F:quinone binding"/>
    <property type="evidence" value="ECO:0007669"/>
    <property type="project" value="UniProtKB-KW"/>
</dbReference>
<dbReference type="GO" id="GO:0019684">
    <property type="term" value="P:photosynthesis, light reaction"/>
    <property type="evidence" value="ECO:0007669"/>
    <property type="project" value="UniProtKB-UniRule"/>
</dbReference>
<dbReference type="FunFam" id="3.30.460.80:FF:000004">
    <property type="entry name" value="NAD(P)H-quinone oxidoreductase subunit J, chloroplastic"/>
    <property type="match status" value="1"/>
</dbReference>
<dbReference type="Gene3D" id="3.30.460.80">
    <property type="entry name" value="NADH:ubiquinone oxidoreductase, 30kDa subunit"/>
    <property type="match status" value="1"/>
</dbReference>
<dbReference type="HAMAP" id="MF_01357">
    <property type="entry name" value="NDH1_NuoC"/>
    <property type="match status" value="1"/>
</dbReference>
<dbReference type="InterPro" id="IPR010218">
    <property type="entry name" value="NADH_DH_suC"/>
</dbReference>
<dbReference type="InterPro" id="IPR037232">
    <property type="entry name" value="NADH_quin_OxRdtase_su_C/D-like"/>
</dbReference>
<dbReference type="InterPro" id="IPR001268">
    <property type="entry name" value="NADH_UbQ_OxRdtase_30kDa_su"/>
</dbReference>
<dbReference type="InterPro" id="IPR020396">
    <property type="entry name" value="NADH_UbQ_OxRdtase_CS"/>
</dbReference>
<dbReference type="NCBIfam" id="NF009141">
    <property type="entry name" value="PRK12494.1"/>
    <property type="match status" value="1"/>
</dbReference>
<dbReference type="PANTHER" id="PTHR10884:SF14">
    <property type="entry name" value="NADH DEHYDROGENASE [UBIQUINONE] IRON-SULFUR PROTEIN 3, MITOCHONDRIAL"/>
    <property type="match status" value="1"/>
</dbReference>
<dbReference type="PANTHER" id="PTHR10884">
    <property type="entry name" value="NADH DEHYDROGENASE UBIQUINONE IRON-SULFUR PROTEIN 3"/>
    <property type="match status" value="1"/>
</dbReference>
<dbReference type="Pfam" id="PF00329">
    <property type="entry name" value="Complex1_30kDa"/>
    <property type="match status" value="1"/>
</dbReference>
<dbReference type="SUPFAM" id="SSF143243">
    <property type="entry name" value="Nqo5-like"/>
    <property type="match status" value="1"/>
</dbReference>
<dbReference type="PROSITE" id="PS00542">
    <property type="entry name" value="COMPLEX1_30K"/>
    <property type="match status" value="1"/>
</dbReference>
<name>NDHJ_JASNU</name>
<organism>
    <name type="scientific">Jasminum nudiflorum</name>
    <name type="common">Winter jasmine</name>
    <dbReference type="NCBI Taxonomy" id="126431"/>
    <lineage>
        <taxon>Eukaryota</taxon>
        <taxon>Viridiplantae</taxon>
        <taxon>Streptophyta</taxon>
        <taxon>Embryophyta</taxon>
        <taxon>Tracheophyta</taxon>
        <taxon>Spermatophyta</taxon>
        <taxon>Magnoliopsida</taxon>
        <taxon>eudicotyledons</taxon>
        <taxon>Gunneridae</taxon>
        <taxon>Pentapetalae</taxon>
        <taxon>asterids</taxon>
        <taxon>lamiids</taxon>
        <taxon>Lamiales</taxon>
        <taxon>Oleaceae</taxon>
        <taxon>Jasmineae</taxon>
        <taxon>Jasminum</taxon>
    </lineage>
</organism>
<feature type="chain" id="PRO_0000358274" description="NAD(P)H-quinone oxidoreductase subunit J, chloroplastic">
    <location>
        <begin position="1"/>
        <end position="158"/>
    </location>
</feature>